<gene>
    <name evidence="1" type="primary">glyQ</name>
    <name type="ordered locus">BCI_0161</name>
</gene>
<organism>
    <name type="scientific">Baumannia cicadellinicola subsp. Homalodisca coagulata</name>
    <dbReference type="NCBI Taxonomy" id="374463"/>
    <lineage>
        <taxon>Bacteria</taxon>
        <taxon>Pseudomonadati</taxon>
        <taxon>Pseudomonadota</taxon>
        <taxon>Gammaproteobacteria</taxon>
        <taxon>Candidatus Palibaumannia</taxon>
    </lineage>
</organism>
<name>SYGA_BAUCH</name>
<feature type="chain" id="PRO_1000101176" description="Glycine--tRNA ligase alpha subunit">
    <location>
        <begin position="1"/>
        <end position="302"/>
    </location>
</feature>
<sequence length="302" mass="34821">MSNTFQDLIMLLQNYWAQQGCTIIQPIDIAVGAGTSHPMTCLLALGPEPIATAYVQPSRRPTDGRYGNNPNRLQHYYQFQVILKPSPHNIQEIYLDSLKQIGLDPTLNDIRFVEDNWENQTLGAWGLGWEVWLNGMEVTQFTYFQQVGGLECQIVAGEITYGLERIAMHLQNVENVFDLRWNKGAFGYITYGDIFLQNEVEQSTYNFEYADANLLLNCFDFYEKEAQKLLALDKPLPLPAYECVLKAVHNFNMLEARKAISVIERQCYILRLRTLTKAVAQAYYISRQSLGFPMCKRHKKRR</sequence>
<reference key="1">
    <citation type="journal article" date="2006" name="PLoS Biol.">
        <title>Metabolic complementarity and genomics of the dual bacterial symbiosis of sharpshooters.</title>
        <authorList>
            <person name="Wu D."/>
            <person name="Daugherty S.C."/>
            <person name="Van Aken S.E."/>
            <person name="Pai G.H."/>
            <person name="Watkins K.L."/>
            <person name="Khouri H."/>
            <person name="Tallon L.J."/>
            <person name="Zaborsky J.M."/>
            <person name="Dunbar H.E."/>
            <person name="Tran P.L."/>
            <person name="Moran N.A."/>
            <person name="Eisen J.A."/>
        </authorList>
    </citation>
    <scope>NUCLEOTIDE SEQUENCE [LARGE SCALE GENOMIC DNA]</scope>
</reference>
<proteinExistence type="inferred from homology"/>
<evidence type="ECO:0000255" key="1">
    <source>
        <dbReference type="HAMAP-Rule" id="MF_00254"/>
    </source>
</evidence>
<protein>
    <recommendedName>
        <fullName evidence="1">Glycine--tRNA ligase alpha subunit</fullName>
        <ecNumber evidence="1">6.1.1.14</ecNumber>
    </recommendedName>
    <alternativeName>
        <fullName evidence="1">Glycyl-tRNA synthetase alpha subunit</fullName>
        <shortName evidence="1">GlyRS</shortName>
    </alternativeName>
</protein>
<dbReference type="EC" id="6.1.1.14" evidence="1"/>
<dbReference type="EMBL" id="CP000238">
    <property type="protein sequence ID" value="ABF14333.1"/>
    <property type="molecule type" value="Genomic_DNA"/>
</dbReference>
<dbReference type="RefSeq" id="WP_011520356.1">
    <property type="nucleotide sequence ID" value="NC_007984.1"/>
</dbReference>
<dbReference type="SMR" id="Q1LTU1"/>
<dbReference type="STRING" id="374463.BCI_0161"/>
<dbReference type="KEGG" id="bci:BCI_0161"/>
<dbReference type="HOGENOM" id="CLU_057066_1_0_6"/>
<dbReference type="OrthoDB" id="9802183at2"/>
<dbReference type="Proteomes" id="UP000002427">
    <property type="component" value="Chromosome"/>
</dbReference>
<dbReference type="GO" id="GO:0005829">
    <property type="term" value="C:cytosol"/>
    <property type="evidence" value="ECO:0007669"/>
    <property type="project" value="TreeGrafter"/>
</dbReference>
<dbReference type="GO" id="GO:0005524">
    <property type="term" value="F:ATP binding"/>
    <property type="evidence" value="ECO:0007669"/>
    <property type="project" value="UniProtKB-UniRule"/>
</dbReference>
<dbReference type="GO" id="GO:0004820">
    <property type="term" value="F:glycine-tRNA ligase activity"/>
    <property type="evidence" value="ECO:0007669"/>
    <property type="project" value="UniProtKB-UniRule"/>
</dbReference>
<dbReference type="GO" id="GO:0006426">
    <property type="term" value="P:glycyl-tRNA aminoacylation"/>
    <property type="evidence" value="ECO:0007669"/>
    <property type="project" value="UniProtKB-UniRule"/>
</dbReference>
<dbReference type="CDD" id="cd00733">
    <property type="entry name" value="GlyRS_alpha_core"/>
    <property type="match status" value="1"/>
</dbReference>
<dbReference type="FunFam" id="3.30.930.10:FF:000006">
    <property type="entry name" value="Glycine--tRNA ligase alpha subunit"/>
    <property type="match status" value="1"/>
</dbReference>
<dbReference type="Gene3D" id="3.30.930.10">
    <property type="entry name" value="Bira Bifunctional Protein, Domain 2"/>
    <property type="match status" value="1"/>
</dbReference>
<dbReference type="Gene3D" id="1.20.58.180">
    <property type="entry name" value="Class II aaRS and biotin synthetases, domain 2"/>
    <property type="match status" value="1"/>
</dbReference>
<dbReference type="HAMAP" id="MF_00254">
    <property type="entry name" value="Gly_tRNA_synth_alpha"/>
    <property type="match status" value="1"/>
</dbReference>
<dbReference type="InterPro" id="IPR045864">
    <property type="entry name" value="aa-tRNA-synth_II/BPL/LPL"/>
</dbReference>
<dbReference type="InterPro" id="IPR006194">
    <property type="entry name" value="Gly-tRNA-synth_heterodimer"/>
</dbReference>
<dbReference type="InterPro" id="IPR002310">
    <property type="entry name" value="Gly-tRNA_ligase_asu"/>
</dbReference>
<dbReference type="NCBIfam" id="TIGR00388">
    <property type="entry name" value="glyQ"/>
    <property type="match status" value="1"/>
</dbReference>
<dbReference type="NCBIfam" id="NF006827">
    <property type="entry name" value="PRK09348.1"/>
    <property type="match status" value="1"/>
</dbReference>
<dbReference type="PANTHER" id="PTHR30075:SF2">
    <property type="entry name" value="GLYCINE--TRNA LIGASE, CHLOROPLASTIC_MITOCHONDRIAL 2"/>
    <property type="match status" value="1"/>
</dbReference>
<dbReference type="PANTHER" id="PTHR30075">
    <property type="entry name" value="GLYCYL-TRNA SYNTHETASE"/>
    <property type="match status" value="1"/>
</dbReference>
<dbReference type="Pfam" id="PF02091">
    <property type="entry name" value="tRNA-synt_2e"/>
    <property type="match status" value="1"/>
</dbReference>
<dbReference type="PRINTS" id="PR01044">
    <property type="entry name" value="TRNASYNTHGA"/>
</dbReference>
<dbReference type="SUPFAM" id="SSF55681">
    <property type="entry name" value="Class II aaRS and biotin synthetases"/>
    <property type="match status" value="1"/>
</dbReference>
<dbReference type="PROSITE" id="PS50861">
    <property type="entry name" value="AA_TRNA_LIGASE_II_GLYAB"/>
    <property type="match status" value="1"/>
</dbReference>
<comment type="catalytic activity">
    <reaction evidence="1">
        <text>tRNA(Gly) + glycine + ATP = glycyl-tRNA(Gly) + AMP + diphosphate</text>
        <dbReference type="Rhea" id="RHEA:16013"/>
        <dbReference type="Rhea" id="RHEA-COMP:9664"/>
        <dbReference type="Rhea" id="RHEA-COMP:9683"/>
        <dbReference type="ChEBI" id="CHEBI:30616"/>
        <dbReference type="ChEBI" id="CHEBI:33019"/>
        <dbReference type="ChEBI" id="CHEBI:57305"/>
        <dbReference type="ChEBI" id="CHEBI:78442"/>
        <dbReference type="ChEBI" id="CHEBI:78522"/>
        <dbReference type="ChEBI" id="CHEBI:456215"/>
        <dbReference type="EC" id="6.1.1.14"/>
    </reaction>
</comment>
<comment type="subunit">
    <text evidence="1">Tetramer of two alpha and two beta subunits.</text>
</comment>
<comment type="subcellular location">
    <subcellularLocation>
        <location evidence="1">Cytoplasm</location>
    </subcellularLocation>
</comment>
<comment type="similarity">
    <text evidence="1">Belongs to the class-II aminoacyl-tRNA synthetase family.</text>
</comment>
<keyword id="KW-0030">Aminoacyl-tRNA synthetase</keyword>
<keyword id="KW-0067">ATP-binding</keyword>
<keyword id="KW-0963">Cytoplasm</keyword>
<keyword id="KW-0436">Ligase</keyword>
<keyword id="KW-0547">Nucleotide-binding</keyword>
<keyword id="KW-0648">Protein biosynthesis</keyword>
<keyword id="KW-1185">Reference proteome</keyword>
<accession>Q1LTU1</accession>